<sequence>MIRITSRSVKEAAGIRSVSSSTVRLNIAPKVVSPPVPPPVKPQGSEIPPPPPPPPLKAKRFSLFGFLFKTTLLATVVYGGTLYAATKNDKVMDFVIDKQLPFHEELIDLIENGSTEDLQEAWEQLKNKFTDVKLPTKDDIDELTQKLEHRGEDIIKETKKKIASTHIGHKSGTDLTPTEQLQRGVEIESVKKDVAHLPLIELNSDLGKSVDETVKQTITSFNNFIQSIDASSLATKDDKLITSINTSVNQLASRLNSLTKDFDNELQNKLKVSQTELFSSFTKKELELTENLLHQFSTEKQQLEAKLNQKLSQEIQAARAAISQAASNAVAMVRIEQTKNFEKLVSEKLNEERNGRLANLEKLNDRIVELEKFAEGFETQIVSNHKKAIIHQAVSKLKSLLLAPAAGDKPQPIKPYIDELTKIATDDEVLALAIKDLSPLITNESTHSILTNAQLLSRWEQLAPELRSASLLPPNAGLLGHLASIVFSKLLLPVKGVKEDGKDIESVIGRVESSLARGELDIAVEEAANLKGWSRKLANDWVVEGRKRLEIEFLLGLIESESKII</sequence>
<dbReference type="EMBL" id="CM000309">
    <property type="protein sequence ID" value="EEQ43451.1"/>
    <property type="molecule type" value="Genomic_DNA"/>
</dbReference>
<dbReference type="SMR" id="C4YLH0"/>
<dbReference type="PaxDb" id="5476-C4YLH0"/>
<dbReference type="VEuPathDB" id="FungiDB:CAWG_01688"/>
<dbReference type="HOGENOM" id="CLU_008024_2_0_1"/>
<dbReference type="OMA" id="RLDHQMQ"/>
<dbReference type="OrthoDB" id="25376at766764"/>
<dbReference type="Proteomes" id="UP000001429">
    <property type="component" value="Chromosome R"/>
</dbReference>
<dbReference type="GO" id="GO:0061617">
    <property type="term" value="C:MICOS complex"/>
    <property type="evidence" value="ECO:0007669"/>
    <property type="project" value="TreeGrafter"/>
</dbReference>
<dbReference type="GO" id="GO:0042407">
    <property type="term" value="P:cristae formation"/>
    <property type="evidence" value="ECO:0007669"/>
    <property type="project" value="TreeGrafter"/>
</dbReference>
<dbReference type="InterPro" id="IPR019133">
    <property type="entry name" value="MIC60"/>
</dbReference>
<dbReference type="PANTHER" id="PTHR15415:SF7">
    <property type="entry name" value="MICOS COMPLEX SUBUNIT MIC60"/>
    <property type="match status" value="1"/>
</dbReference>
<dbReference type="PANTHER" id="PTHR15415">
    <property type="entry name" value="MITOFILIN"/>
    <property type="match status" value="1"/>
</dbReference>
<dbReference type="Pfam" id="PF09731">
    <property type="entry name" value="Mitofilin"/>
    <property type="match status" value="1"/>
</dbReference>
<keyword id="KW-0175">Coiled coil</keyword>
<keyword id="KW-0472">Membrane</keyword>
<keyword id="KW-0496">Mitochondrion</keyword>
<keyword id="KW-0999">Mitochondrion inner membrane</keyword>
<keyword id="KW-0809">Transit peptide</keyword>
<keyword id="KW-0812">Transmembrane</keyword>
<keyword id="KW-1133">Transmembrane helix</keyword>
<name>MIC60_CANAW</name>
<proteinExistence type="inferred from homology"/>
<feature type="transit peptide" description="Mitochondrion" evidence="2">
    <location>
        <begin position="1"/>
        <end position="25"/>
    </location>
</feature>
<feature type="chain" id="PRO_0000406649" description="MICOS complex subunit MIC60">
    <location>
        <begin position="26"/>
        <end position="565"/>
    </location>
</feature>
<feature type="topological domain" description="Mitochondrial matrix" evidence="2">
    <location>
        <begin position="26"/>
        <end position="62"/>
    </location>
</feature>
<feature type="transmembrane region" description="Helical" evidence="2">
    <location>
        <begin position="63"/>
        <end position="85"/>
    </location>
</feature>
<feature type="topological domain" description="Mitochondrial intermembrane" evidence="2">
    <location>
        <begin position="86"/>
        <end position="565"/>
    </location>
</feature>
<feature type="region of interest" description="Disordered" evidence="3">
    <location>
        <begin position="34"/>
        <end position="54"/>
    </location>
</feature>
<feature type="coiled-coil region" evidence="2">
    <location>
        <begin position="282"/>
        <end position="381"/>
    </location>
</feature>
<evidence type="ECO:0000250" key="1"/>
<evidence type="ECO:0000255" key="2"/>
<evidence type="ECO:0000256" key="3">
    <source>
        <dbReference type="SAM" id="MobiDB-lite"/>
    </source>
</evidence>
<evidence type="ECO:0000305" key="4"/>
<accession>C4YLH0</accession>
<comment type="function">
    <text evidence="1">Component of the MICOS complex, a large protein complex of the mitochondrial inner membrane that plays crucial roles in the maintenance of crista junctions, inner membrane architecture, and formation of contact sites to the outer membrane. Plays a role in keeping cristae membranes connected to the inner boundary membrane. Also promotes protein import via the mitochondrial intermembrane space assembly (MIA) pathway (By similarity).</text>
</comment>
<comment type="subunit">
    <text evidence="1">Component of the mitochondrial contact site and cristae organizing system (MICOS) complex.</text>
</comment>
<comment type="subcellular location">
    <subcellularLocation>
        <location evidence="1">Mitochondrion inner membrane</location>
        <topology evidence="1">Single-pass membrane protein</topology>
    </subcellularLocation>
</comment>
<comment type="similarity">
    <text evidence="4">Belongs to the MICOS complex subunit Mic60 family.</text>
</comment>
<reference key="1">
    <citation type="journal article" date="2009" name="Nature">
        <title>Evolution of pathogenicity and sexual reproduction in eight Candida genomes.</title>
        <authorList>
            <person name="Butler G."/>
            <person name="Rasmussen M.D."/>
            <person name="Lin M.F."/>
            <person name="Santos M.A.S."/>
            <person name="Sakthikumar S."/>
            <person name="Munro C.A."/>
            <person name="Rheinbay E."/>
            <person name="Grabherr M."/>
            <person name="Forche A."/>
            <person name="Reedy J.L."/>
            <person name="Agrafioti I."/>
            <person name="Arnaud M.B."/>
            <person name="Bates S."/>
            <person name="Brown A.J.P."/>
            <person name="Brunke S."/>
            <person name="Costanzo M.C."/>
            <person name="Fitzpatrick D.A."/>
            <person name="de Groot P.W.J."/>
            <person name="Harris D."/>
            <person name="Hoyer L.L."/>
            <person name="Hube B."/>
            <person name="Klis F.M."/>
            <person name="Kodira C."/>
            <person name="Lennard N."/>
            <person name="Logue M.E."/>
            <person name="Martin R."/>
            <person name="Neiman A.M."/>
            <person name="Nikolaou E."/>
            <person name="Quail M.A."/>
            <person name="Quinn J."/>
            <person name="Santos M.C."/>
            <person name="Schmitzberger F.F."/>
            <person name="Sherlock G."/>
            <person name="Shah P."/>
            <person name="Silverstein K.A.T."/>
            <person name="Skrzypek M.S."/>
            <person name="Soll D."/>
            <person name="Staggs R."/>
            <person name="Stansfield I."/>
            <person name="Stumpf M.P.H."/>
            <person name="Sudbery P.E."/>
            <person name="Srikantha T."/>
            <person name="Zeng Q."/>
            <person name="Berman J."/>
            <person name="Berriman M."/>
            <person name="Heitman J."/>
            <person name="Gow N.A.R."/>
            <person name="Lorenz M.C."/>
            <person name="Birren B.W."/>
            <person name="Kellis M."/>
            <person name="Cuomo C.A."/>
        </authorList>
    </citation>
    <scope>NUCLEOTIDE SEQUENCE [LARGE SCALE GENOMIC DNA]</scope>
    <source>
        <strain>WO-1</strain>
    </source>
</reference>
<organism>
    <name type="scientific">Candida albicans (strain WO-1)</name>
    <name type="common">Yeast</name>
    <dbReference type="NCBI Taxonomy" id="294748"/>
    <lineage>
        <taxon>Eukaryota</taxon>
        <taxon>Fungi</taxon>
        <taxon>Dikarya</taxon>
        <taxon>Ascomycota</taxon>
        <taxon>Saccharomycotina</taxon>
        <taxon>Pichiomycetes</taxon>
        <taxon>Debaryomycetaceae</taxon>
        <taxon>Candida/Lodderomyces clade</taxon>
        <taxon>Candida</taxon>
    </lineage>
</organism>
<gene>
    <name type="primary">MIC60</name>
    <name type="ORF">CAWG_01688</name>
</gene>
<protein>
    <recommendedName>
        <fullName>MICOS complex subunit MIC60</fullName>
    </recommendedName>
    <alternativeName>
        <fullName>Mitofilin</fullName>
    </alternativeName>
</protein>